<accession>A0A291PQG3</accession>
<proteinExistence type="evidence at protein level"/>
<name>UGT4_DACCO</name>
<evidence type="ECO:0000255" key="1"/>
<evidence type="ECO:0000255" key="2">
    <source>
        <dbReference type="PROSITE-ProRule" id="PRU00498"/>
    </source>
</evidence>
<evidence type="ECO:0000255" key="3">
    <source>
        <dbReference type="RuleBase" id="RU003718"/>
    </source>
</evidence>
<evidence type="ECO:0000269" key="4">
    <source>
    </source>
</evidence>
<evidence type="ECO:0000303" key="5">
    <source>
    </source>
</evidence>
<evidence type="ECO:0000305" key="6"/>
<evidence type="ECO:0000305" key="7">
    <source>
    </source>
</evidence>
<evidence type="ECO:0000312" key="8">
    <source>
        <dbReference type="EMBL" id="ATL15305.1"/>
    </source>
</evidence>
<dbReference type="EC" id="2.4.1.-" evidence="6"/>
<dbReference type="EMBL" id="KY860726">
    <property type="protein sequence ID" value="ATL15305.1"/>
    <property type="molecule type" value="mRNA"/>
</dbReference>
<dbReference type="SMR" id="A0A291PQG3"/>
<dbReference type="GlyCosmos" id="A0A291PQG3">
    <property type="glycosylation" value="4 sites, No reported glycans"/>
</dbReference>
<dbReference type="GO" id="GO:0005783">
    <property type="term" value="C:endoplasmic reticulum"/>
    <property type="evidence" value="ECO:0007669"/>
    <property type="project" value="UniProtKB-KW"/>
</dbReference>
<dbReference type="GO" id="GO:0016020">
    <property type="term" value="C:membrane"/>
    <property type="evidence" value="ECO:0007669"/>
    <property type="project" value="UniProtKB-KW"/>
</dbReference>
<dbReference type="GO" id="GO:0008194">
    <property type="term" value="F:UDP-glycosyltransferase activity"/>
    <property type="evidence" value="ECO:0007669"/>
    <property type="project" value="InterPro"/>
</dbReference>
<dbReference type="CDD" id="cd03784">
    <property type="entry name" value="GT1_Gtf-like"/>
    <property type="match status" value="1"/>
</dbReference>
<dbReference type="FunFam" id="3.40.50.2000:FF:000021">
    <property type="entry name" value="UDP-glucuronosyltransferase"/>
    <property type="match status" value="1"/>
</dbReference>
<dbReference type="Gene3D" id="3.40.50.2000">
    <property type="entry name" value="Glycogen Phosphorylase B"/>
    <property type="match status" value="2"/>
</dbReference>
<dbReference type="InterPro" id="IPR050271">
    <property type="entry name" value="UDP-glycosyltransferase"/>
</dbReference>
<dbReference type="InterPro" id="IPR002213">
    <property type="entry name" value="UDP_glucos_trans"/>
</dbReference>
<dbReference type="InterPro" id="IPR035595">
    <property type="entry name" value="UDP_glycos_trans_CS"/>
</dbReference>
<dbReference type="PANTHER" id="PTHR48043">
    <property type="entry name" value="EG:EG0003.4 PROTEIN-RELATED"/>
    <property type="match status" value="1"/>
</dbReference>
<dbReference type="PANTHER" id="PTHR48043:SF145">
    <property type="entry name" value="FI06409P-RELATED"/>
    <property type="match status" value="1"/>
</dbReference>
<dbReference type="Pfam" id="PF00201">
    <property type="entry name" value="UDPGT"/>
    <property type="match status" value="1"/>
</dbReference>
<dbReference type="SUPFAM" id="SSF53756">
    <property type="entry name" value="UDP-Glycosyltransferase/glycogen phosphorylase"/>
    <property type="match status" value="1"/>
</dbReference>
<dbReference type="PROSITE" id="PS00375">
    <property type="entry name" value="UDPGT"/>
    <property type="match status" value="1"/>
</dbReference>
<comment type="function">
    <text evidence="6">Catalyzes the transfer of a glycosyl group from a UDP-sugar to an acceptor molecule.</text>
</comment>
<comment type="subcellular location">
    <subcellularLocation>
        <location evidence="4">Microsome membrane</location>
        <topology evidence="7">Single-pass type I membrane protein</topology>
    </subcellularLocation>
</comment>
<comment type="developmental stage">
    <text evidence="4">Expressed in adult female.</text>
</comment>
<comment type="similarity">
    <text evidence="3">Belongs to the UDP-glycosyltransferase family.</text>
</comment>
<keyword id="KW-0256">Endoplasmic reticulum</keyword>
<keyword id="KW-0325">Glycoprotein</keyword>
<keyword id="KW-0328">Glycosyltransferase</keyword>
<keyword id="KW-0472">Membrane</keyword>
<keyword id="KW-0492">Microsome</keyword>
<keyword id="KW-0732">Signal</keyword>
<keyword id="KW-0808">Transferase</keyword>
<keyword id="KW-0812">Transmembrane</keyword>
<keyword id="KW-1133">Transmembrane helix</keyword>
<organism evidence="8">
    <name type="scientific">Dactylopius coccus</name>
    <name type="common">Cochineal</name>
    <dbReference type="NCBI Taxonomy" id="765876"/>
    <lineage>
        <taxon>Eukaryota</taxon>
        <taxon>Metazoa</taxon>
        <taxon>Ecdysozoa</taxon>
        <taxon>Arthropoda</taxon>
        <taxon>Hexapoda</taxon>
        <taxon>Insecta</taxon>
        <taxon>Pterygota</taxon>
        <taxon>Neoptera</taxon>
        <taxon>Paraneoptera</taxon>
        <taxon>Hemiptera</taxon>
        <taxon>Sternorrhyncha</taxon>
        <taxon>Coccoidea</taxon>
        <taxon>Dactylopiidae</taxon>
        <taxon>Dactylopius</taxon>
    </lineage>
</organism>
<protein>
    <recommendedName>
        <fullName evidence="6">UDP-glycosyltransferase UGT4</fullName>
        <ecNumber evidence="6">2.4.1.-</ecNumber>
    </recommendedName>
    <alternativeName>
        <fullName evidence="5">UDP-glucosyltransferase 4</fullName>
        <shortName evidence="5">DcUGT4</shortName>
    </alternativeName>
</protein>
<reference evidence="8" key="1">
    <citation type="journal article" date="2017" name="Nat. Commun.">
        <title>Characterization of a membrane-bound C-glucosyltransferase responsible for carminic acid biosynthesis in Dactylopius coccus Costa.</title>
        <authorList>
            <person name="Kannangara R."/>
            <person name="Siukstaite L."/>
            <person name="Borch-Jensen J."/>
            <person name="Madsen B."/>
            <person name="Kongstad K.T."/>
            <person name="Staerk D."/>
            <person name="Bennedsen M."/>
            <person name="Okkels F.T."/>
            <person name="Rasmussen S.A."/>
            <person name="Larsen T.O."/>
            <person name="Frandsen R.J.N."/>
            <person name="Moeller B.L."/>
        </authorList>
    </citation>
    <scope>NUCLEOTIDE SEQUENCE [MRNA]</scope>
    <scope>IDENTIFICATION BY MASS SPECTROMETRY</scope>
    <scope>SUBCELLULAR LOCATION</scope>
    <scope>DEVELOPMENTAL STAGE</scope>
</reference>
<sequence>MTLLRDLLLLYINSLLFINPSIGENILVFLPTKTYSHFKPLEPLFQELAMRGHNVTVFSGFSLTKNISNYSSIVFSAEIEFVNIGMGNLRKQSRIYNWIYVHNELQNYFTQLISDNQLQELLSNKDTQFDLIFIELYHVDGVFALSHRFNCPIIGLSFQPVLPIYNWLIGNPTTFSYIPHVYLPFTDIMSFWKRIINAVFSIFTAAFYNFVSTKGYQKHVDLLLRQTESPKLNIEELSESLSLILAEFHFSSAYTRPNLPNVIDIAGIHIQSPKPLPQDLLDFLDQSEHGVIYVSLGTLIDPIHTDHLGLNLINVFRKLRQRVIWKWKKEFFHDVPKNVLIGEWFPQIDILNHPRCKLFISHGGYHSMLESIYSSVPILGIPFFTDQHHNTAIIEKLKIGKKASTEASEEDLLTAVKELLSNETFKRNSQHQSSIFRDRPMSPMDTAIYWTEYILRYKGASHMKSAVIDLYWFQYILLDIILFYSLIVLILLCILRIFFRMLTK</sequence>
<feature type="signal peptide" evidence="1">
    <location>
        <begin position="1"/>
        <end position="23"/>
    </location>
</feature>
<feature type="chain" id="PRO_5011814698" description="UDP-glycosyltransferase UGT4" evidence="1">
    <location>
        <begin position="24"/>
        <end position="504"/>
    </location>
</feature>
<feature type="topological domain" description="Lumenal" evidence="6">
    <location>
        <begin position="24"/>
        <end position="474"/>
    </location>
</feature>
<feature type="transmembrane region" description="Helical" evidence="1">
    <location>
        <begin position="475"/>
        <end position="495"/>
    </location>
</feature>
<feature type="topological domain" description="Cytoplasmic" evidence="6">
    <location>
        <begin position="496"/>
        <end position="504"/>
    </location>
</feature>
<feature type="glycosylation site" description="N-linked (GlcNAc...) asparagine" evidence="2">
    <location>
        <position position="54"/>
    </location>
</feature>
<feature type="glycosylation site" description="N-linked (GlcNAc...) asparagine" evidence="2">
    <location>
        <position position="66"/>
    </location>
</feature>
<feature type="glycosylation site" description="N-linked (GlcNAc...) asparagine" evidence="2">
    <location>
        <position position="69"/>
    </location>
</feature>
<feature type="glycosylation site" description="N-linked (GlcNAc...) asparagine" evidence="2">
    <location>
        <position position="422"/>
    </location>
</feature>
<gene>
    <name evidence="5" type="primary">UGT4</name>
</gene>